<reference key="1">
    <citation type="submission" date="2007-06" db="EMBL/GenBank/DDBJ databases">
        <title>Complete sequence of Clostridium beijerinckii NCIMB 8052.</title>
        <authorList>
            <consortium name="US DOE Joint Genome Institute"/>
            <person name="Copeland A."/>
            <person name="Lucas S."/>
            <person name="Lapidus A."/>
            <person name="Barry K."/>
            <person name="Detter J.C."/>
            <person name="Glavina del Rio T."/>
            <person name="Hammon N."/>
            <person name="Israni S."/>
            <person name="Dalin E."/>
            <person name="Tice H."/>
            <person name="Pitluck S."/>
            <person name="Sims D."/>
            <person name="Brettin T."/>
            <person name="Bruce D."/>
            <person name="Tapia R."/>
            <person name="Brainard J."/>
            <person name="Schmutz J."/>
            <person name="Larimer F."/>
            <person name="Land M."/>
            <person name="Hauser L."/>
            <person name="Kyrpides N."/>
            <person name="Mikhailova N."/>
            <person name="Bennet G."/>
            <person name="Cann I."/>
            <person name="Chen J.-S."/>
            <person name="Contreras A.L."/>
            <person name="Jones D."/>
            <person name="Kashket E."/>
            <person name="Mitchell W."/>
            <person name="Stoddard S."/>
            <person name="Schwarz W."/>
            <person name="Qureshi N."/>
            <person name="Young M."/>
            <person name="Shi Z."/>
            <person name="Ezeji T."/>
            <person name="White B."/>
            <person name="Blaschek H."/>
            <person name="Richardson P."/>
        </authorList>
    </citation>
    <scope>NUCLEOTIDE SEQUENCE [LARGE SCALE GENOMIC DNA]</scope>
    <source>
        <strain>ATCC 51743 / NCIMB 8052</strain>
    </source>
</reference>
<comment type="function">
    <text evidence="1">Could be involved in insertion of integral membrane proteins into the membrane.</text>
</comment>
<comment type="subcellular location">
    <subcellularLocation>
        <location evidence="1">Cell membrane</location>
        <topology evidence="1">Peripheral membrane protein</topology>
        <orientation evidence="1">Cytoplasmic side</orientation>
    </subcellularLocation>
</comment>
<comment type="similarity">
    <text evidence="1">Belongs to the UPF0161 family.</text>
</comment>
<proteinExistence type="inferred from homology"/>
<name>YIDD_CLOB8</name>
<evidence type="ECO:0000255" key="1">
    <source>
        <dbReference type="HAMAP-Rule" id="MF_00386"/>
    </source>
</evidence>
<gene>
    <name type="ordered locus">Cbei_5102</name>
</gene>
<organism>
    <name type="scientific">Clostridium beijerinckii (strain ATCC 51743 / NCIMB 8052)</name>
    <name type="common">Clostridium acetobutylicum</name>
    <dbReference type="NCBI Taxonomy" id="290402"/>
    <lineage>
        <taxon>Bacteria</taxon>
        <taxon>Bacillati</taxon>
        <taxon>Bacillota</taxon>
        <taxon>Clostridia</taxon>
        <taxon>Eubacteriales</taxon>
        <taxon>Clostridiaceae</taxon>
        <taxon>Clostridium</taxon>
    </lineage>
</organism>
<protein>
    <recommendedName>
        <fullName evidence="1">Putative membrane protein insertion efficiency factor</fullName>
    </recommendedName>
</protein>
<feature type="chain" id="PRO_1000080184" description="Putative membrane protein insertion efficiency factor">
    <location>
        <begin position="1"/>
        <end position="69"/>
    </location>
</feature>
<keyword id="KW-1003">Cell membrane</keyword>
<keyword id="KW-0472">Membrane</keyword>
<dbReference type="EMBL" id="CP000721">
    <property type="protein sequence ID" value="ABR37208.1"/>
    <property type="molecule type" value="Genomic_DNA"/>
</dbReference>
<dbReference type="KEGG" id="cbe:Cbei_5102"/>
<dbReference type="eggNOG" id="COG0759">
    <property type="taxonomic scope" value="Bacteria"/>
</dbReference>
<dbReference type="HOGENOM" id="CLU_144811_6_0_9"/>
<dbReference type="Proteomes" id="UP000000565">
    <property type="component" value="Chromosome"/>
</dbReference>
<dbReference type="GO" id="GO:0005886">
    <property type="term" value="C:plasma membrane"/>
    <property type="evidence" value="ECO:0007669"/>
    <property type="project" value="UniProtKB-SubCell"/>
</dbReference>
<dbReference type="HAMAP" id="MF_00386">
    <property type="entry name" value="UPF0161_YidD"/>
    <property type="match status" value="1"/>
</dbReference>
<dbReference type="InterPro" id="IPR002696">
    <property type="entry name" value="Membr_insert_effic_factor_YidD"/>
</dbReference>
<dbReference type="NCBIfam" id="TIGR00278">
    <property type="entry name" value="membrane protein insertion efficiency factor YidD"/>
    <property type="match status" value="1"/>
</dbReference>
<dbReference type="PANTHER" id="PTHR33383">
    <property type="entry name" value="MEMBRANE PROTEIN INSERTION EFFICIENCY FACTOR-RELATED"/>
    <property type="match status" value="1"/>
</dbReference>
<dbReference type="PANTHER" id="PTHR33383:SF1">
    <property type="entry name" value="MEMBRANE PROTEIN INSERTION EFFICIENCY FACTOR-RELATED"/>
    <property type="match status" value="1"/>
</dbReference>
<dbReference type="Pfam" id="PF01809">
    <property type="entry name" value="YidD"/>
    <property type="match status" value="1"/>
</dbReference>
<dbReference type="SMART" id="SM01234">
    <property type="entry name" value="Haemolytic"/>
    <property type="match status" value="1"/>
</dbReference>
<accession>A6M3M8</accession>
<sequence>MKKLLIRLIKFYRKYISPGRSSCCRFVPTCSQYAIDAINKYGAFKGSALAVYRILRCNPFCKGGYDPVR</sequence>